<name>FTSK_STRA5</name>
<proteinExistence type="inferred from homology"/>
<sequence length="816" mass="90712">MVFMANKKKTKGKKTRRPTKAEIERQRAIQRMITALVLTIILFFGIIRLGIFGITVYNVIRFMVGSLAYLFIAATLIYLYFFKWLRKKDSLVAGFLIASLGLLIEWHAYLFSMPILKDKEILRSTARLIVSDLMQFKITVFAGGGMLGALIYKPIAFLFSNIGAYMIGVLFIILGLFLMSSLEVYDIVEFIRAFKNKVAEKHEQNKKERFAKREMKKAIAEQERIERQKAEEEAYLASVNVDPETGEILEDQAEDNLDDALPPEVSETSTPVFEPEILAYETSPQNDPLPVEPTIYLEDYDSPIPNMRENDEEMVYDLDDDVDDSDIENVDFTPKTTLVYKLPTIDLFAPDKPKNQSKEKDLVRKNIRVLEETFRSFGIDVKVERAEIGPSVTKYEIKPAVGVRVNRISNLSDDLALALAAKDVRIETPIPGKSLIGIEVPNSEIATVSFRELWEQSDANPENLLEVPLGKAVNGNARSFNLARMPHLLVAGSTGSGKSVAVNGIISSILMKARPDQVKFMMIDPKMVELSVYNDIPHLLIPVVTNPRKASKALQKVVDEMENRYELFSKIGVRNIAGYNTKVEEFNASSEQKQIPLPLIVVIVDELADLMMVASKEVEDAIIRLGQKARAAGIHMILATQRPSVDVISGLIKANVPSRIAFAVSSGTDSRTILDENGAEKLLGRGDMLFKPIDENHPVRLQGSFISDDDVERIVGFIKDQAEADYDDAFDPGEVSETDNGSGGGGGVPESDPLFEEAKGLVLETQKASASMIQRRLSVGFNRATRLMEELEAAGVIGPAEGTKPRKVLMTPTPSE</sequence>
<dbReference type="EMBL" id="AE009948">
    <property type="protein sequence ID" value="AAN00396.1"/>
    <property type="molecule type" value="Genomic_DNA"/>
</dbReference>
<dbReference type="RefSeq" id="NP_688523.1">
    <property type="nucleotide sequence ID" value="NC_004116.1"/>
</dbReference>
<dbReference type="RefSeq" id="WP_000231579.1">
    <property type="nucleotide sequence ID" value="NC_004116.1"/>
</dbReference>
<dbReference type="SMR" id="Q8CX05"/>
<dbReference type="STRING" id="208435.SAG1529"/>
<dbReference type="KEGG" id="sag:SAG1529"/>
<dbReference type="PATRIC" id="fig|208435.3.peg.1538"/>
<dbReference type="HOGENOM" id="CLU_001981_9_6_9"/>
<dbReference type="OrthoDB" id="9807790at2"/>
<dbReference type="Proteomes" id="UP000000821">
    <property type="component" value="Chromosome"/>
</dbReference>
<dbReference type="GO" id="GO:0005886">
    <property type="term" value="C:plasma membrane"/>
    <property type="evidence" value="ECO:0007669"/>
    <property type="project" value="UniProtKB-SubCell"/>
</dbReference>
<dbReference type="GO" id="GO:0005524">
    <property type="term" value="F:ATP binding"/>
    <property type="evidence" value="ECO:0007669"/>
    <property type="project" value="UniProtKB-KW"/>
</dbReference>
<dbReference type="GO" id="GO:0016887">
    <property type="term" value="F:ATP hydrolysis activity"/>
    <property type="evidence" value="ECO:0007669"/>
    <property type="project" value="InterPro"/>
</dbReference>
<dbReference type="GO" id="GO:0003677">
    <property type="term" value="F:DNA binding"/>
    <property type="evidence" value="ECO:0007669"/>
    <property type="project" value="UniProtKB-KW"/>
</dbReference>
<dbReference type="GO" id="GO:0051301">
    <property type="term" value="P:cell division"/>
    <property type="evidence" value="ECO:0007669"/>
    <property type="project" value="UniProtKB-KW"/>
</dbReference>
<dbReference type="GO" id="GO:0007059">
    <property type="term" value="P:chromosome segregation"/>
    <property type="evidence" value="ECO:0007669"/>
    <property type="project" value="UniProtKB-KW"/>
</dbReference>
<dbReference type="CDD" id="cd01127">
    <property type="entry name" value="TrwB_TraG_TraD_VirD4"/>
    <property type="match status" value="1"/>
</dbReference>
<dbReference type="Gene3D" id="3.30.980.40">
    <property type="match status" value="1"/>
</dbReference>
<dbReference type="Gene3D" id="3.40.50.300">
    <property type="entry name" value="P-loop containing nucleotide triphosphate hydrolases"/>
    <property type="match status" value="1"/>
</dbReference>
<dbReference type="Gene3D" id="1.10.10.10">
    <property type="entry name" value="Winged helix-like DNA-binding domain superfamily/Winged helix DNA-binding domain"/>
    <property type="match status" value="1"/>
</dbReference>
<dbReference type="InterPro" id="IPR003593">
    <property type="entry name" value="AAA+_ATPase"/>
</dbReference>
<dbReference type="InterPro" id="IPR050206">
    <property type="entry name" value="FtsK/SpoIIIE/SftA"/>
</dbReference>
<dbReference type="InterPro" id="IPR041027">
    <property type="entry name" value="FtsK_alpha"/>
</dbReference>
<dbReference type="InterPro" id="IPR002543">
    <property type="entry name" value="FtsK_dom"/>
</dbReference>
<dbReference type="InterPro" id="IPR018541">
    <property type="entry name" value="Ftsk_gamma"/>
</dbReference>
<dbReference type="InterPro" id="IPR027417">
    <property type="entry name" value="P-loop_NTPase"/>
</dbReference>
<dbReference type="InterPro" id="IPR036388">
    <property type="entry name" value="WH-like_DNA-bd_sf"/>
</dbReference>
<dbReference type="InterPro" id="IPR036390">
    <property type="entry name" value="WH_DNA-bd_sf"/>
</dbReference>
<dbReference type="PANTHER" id="PTHR22683:SF41">
    <property type="entry name" value="DNA TRANSLOCASE FTSK"/>
    <property type="match status" value="1"/>
</dbReference>
<dbReference type="PANTHER" id="PTHR22683">
    <property type="entry name" value="SPORULATION PROTEIN RELATED"/>
    <property type="match status" value="1"/>
</dbReference>
<dbReference type="Pfam" id="PF17854">
    <property type="entry name" value="FtsK_alpha"/>
    <property type="match status" value="1"/>
</dbReference>
<dbReference type="Pfam" id="PF09397">
    <property type="entry name" value="FtsK_gamma"/>
    <property type="match status" value="1"/>
</dbReference>
<dbReference type="Pfam" id="PF01580">
    <property type="entry name" value="FtsK_SpoIIIE"/>
    <property type="match status" value="1"/>
</dbReference>
<dbReference type="SMART" id="SM00382">
    <property type="entry name" value="AAA"/>
    <property type="match status" value="1"/>
</dbReference>
<dbReference type="SMART" id="SM00843">
    <property type="entry name" value="Ftsk_gamma"/>
    <property type="match status" value="1"/>
</dbReference>
<dbReference type="SUPFAM" id="SSF52540">
    <property type="entry name" value="P-loop containing nucleoside triphosphate hydrolases"/>
    <property type="match status" value="1"/>
</dbReference>
<dbReference type="SUPFAM" id="SSF46785">
    <property type="entry name" value="Winged helix' DNA-binding domain"/>
    <property type="match status" value="1"/>
</dbReference>
<dbReference type="PROSITE" id="PS50901">
    <property type="entry name" value="FTSK"/>
    <property type="match status" value="1"/>
</dbReference>
<evidence type="ECO:0000250" key="1"/>
<evidence type="ECO:0000255" key="2"/>
<evidence type="ECO:0000255" key="3">
    <source>
        <dbReference type="PROSITE-ProRule" id="PRU00289"/>
    </source>
</evidence>
<evidence type="ECO:0000256" key="4">
    <source>
        <dbReference type="SAM" id="MobiDB-lite"/>
    </source>
</evidence>
<evidence type="ECO:0000305" key="5"/>
<organism>
    <name type="scientific">Streptococcus agalactiae serotype V (strain ATCC BAA-611 / 2603 V/R)</name>
    <dbReference type="NCBI Taxonomy" id="208435"/>
    <lineage>
        <taxon>Bacteria</taxon>
        <taxon>Bacillati</taxon>
        <taxon>Bacillota</taxon>
        <taxon>Bacilli</taxon>
        <taxon>Lactobacillales</taxon>
        <taxon>Streptococcaceae</taxon>
        <taxon>Streptococcus</taxon>
    </lineage>
</organism>
<accession>Q8CX05</accession>
<feature type="chain" id="PRO_0000098302" description="DNA translocase FtsK">
    <location>
        <begin position="1"/>
        <end position="816"/>
    </location>
</feature>
<feature type="transmembrane region" description="Helical" evidence="2">
    <location>
        <begin position="35"/>
        <end position="57"/>
    </location>
</feature>
<feature type="transmembrane region" description="Helical" evidence="2">
    <location>
        <begin position="62"/>
        <end position="84"/>
    </location>
</feature>
<feature type="transmembrane region" description="Helical" evidence="2">
    <location>
        <begin position="91"/>
        <end position="113"/>
    </location>
</feature>
<feature type="transmembrane region" description="Helical" evidence="2">
    <location>
        <begin position="128"/>
        <end position="150"/>
    </location>
</feature>
<feature type="transmembrane region" description="Helical" evidence="2">
    <location>
        <begin position="157"/>
        <end position="179"/>
    </location>
</feature>
<feature type="topological domain" description="Cytoplasmic" evidence="2">
    <location>
        <begin position="180"/>
        <end position="816"/>
    </location>
</feature>
<feature type="domain" description="FtsK" evidence="3">
    <location>
        <begin position="475"/>
        <end position="671"/>
    </location>
</feature>
<feature type="region of interest" description="Disordered" evidence="4">
    <location>
        <begin position="1"/>
        <end position="20"/>
    </location>
</feature>
<feature type="region of interest" description="Disordered" evidence="4">
    <location>
        <begin position="726"/>
        <end position="752"/>
    </location>
</feature>
<feature type="compositionally biased region" description="Basic residues" evidence="4">
    <location>
        <begin position="1"/>
        <end position="18"/>
    </location>
</feature>
<feature type="compositionally biased region" description="Acidic residues" evidence="4">
    <location>
        <begin position="726"/>
        <end position="737"/>
    </location>
</feature>
<feature type="binding site" evidence="3">
    <location>
        <begin position="495"/>
        <end position="500"/>
    </location>
    <ligand>
        <name>ATP</name>
        <dbReference type="ChEBI" id="CHEBI:30616"/>
    </ligand>
</feature>
<protein>
    <recommendedName>
        <fullName>DNA translocase FtsK</fullName>
    </recommendedName>
</protein>
<comment type="function">
    <text evidence="1">Essential cell division protein that coordinates cell division and chromosome segregation. The N-terminus is involved in assembly of the cell-division machinery. The C-terminus functions as a DNA motor that moves dsDNA in an ATP-dependent manner towards the difSL recombination site, which is located within the replication terminus region. Required for activation of the XerS recombinase, allowing activation of chromosome unlinking by recombination (By similarity).</text>
</comment>
<comment type="subunit">
    <text evidence="1">Homohexamer. Forms a ring that surrounds DNA (By similarity).</text>
</comment>
<comment type="subcellular location">
    <subcellularLocation>
        <location evidence="1">Cell membrane</location>
        <topology evidence="1">Multi-pass membrane protein</topology>
    </subcellularLocation>
    <text evidence="1">Located at the septum.</text>
</comment>
<comment type="domain">
    <text evidence="1">Consists of an N-terminal domain, which is sufficient for the localization to the septal ring and is required for cell division, followed by a linker domain, and a C-terminal domain, which forms the translocation motor involved in chromosome segregation. The C-terminal domain can be further subdivided into alpha, beta and gamma subdomains. The alpha and beta subdomains form the DNA pump, and the gamma subdomain is a regulatory subdomain (By similarity).</text>
</comment>
<comment type="similarity">
    <text evidence="5">Belongs to the FtsK/SpoIIIE/SftA family.</text>
</comment>
<reference key="1">
    <citation type="journal article" date="2002" name="Proc. Natl. Acad. Sci. U.S.A.">
        <title>Complete genome sequence and comparative genomic analysis of an emerging human pathogen, serotype V Streptococcus agalactiae.</title>
        <authorList>
            <person name="Tettelin H."/>
            <person name="Masignani V."/>
            <person name="Cieslewicz M.J."/>
            <person name="Eisen J.A."/>
            <person name="Peterson S.N."/>
            <person name="Wessels M.R."/>
            <person name="Paulsen I.T."/>
            <person name="Nelson K.E."/>
            <person name="Margarit I."/>
            <person name="Read T.D."/>
            <person name="Madoff L.C."/>
            <person name="Wolf A.M."/>
            <person name="Beanan M.J."/>
            <person name="Brinkac L.M."/>
            <person name="Daugherty S.C."/>
            <person name="DeBoy R.T."/>
            <person name="Durkin A.S."/>
            <person name="Kolonay J.F."/>
            <person name="Madupu R."/>
            <person name="Lewis M.R."/>
            <person name="Radune D."/>
            <person name="Fedorova N.B."/>
            <person name="Scanlan D."/>
            <person name="Khouri H.M."/>
            <person name="Mulligan S."/>
            <person name="Carty H.A."/>
            <person name="Cline R.T."/>
            <person name="Van Aken S.E."/>
            <person name="Gill J."/>
            <person name="Scarselli M."/>
            <person name="Mora M."/>
            <person name="Iacobini E.T."/>
            <person name="Brettoni C."/>
            <person name="Galli G."/>
            <person name="Mariani M."/>
            <person name="Vegni F."/>
            <person name="Maione D."/>
            <person name="Rinaudo D."/>
            <person name="Rappuoli R."/>
            <person name="Telford J.L."/>
            <person name="Kasper D.L."/>
            <person name="Grandi G."/>
            <person name="Fraser C.M."/>
        </authorList>
    </citation>
    <scope>NUCLEOTIDE SEQUENCE [LARGE SCALE GENOMIC DNA]</scope>
    <source>
        <strain>ATCC BAA-611 / 2603 V/R</strain>
    </source>
</reference>
<keyword id="KW-0067">ATP-binding</keyword>
<keyword id="KW-0131">Cell cycle</keyword>
<keyword id="KW-0132">Cell division</keyword>
<keyword id="KW-1003">Cell membrane</keyword>
<keyword id="KW-0159">Chromosome partition</keyword>
<keyword id="KW-0238">DNA-binding</keyword>
<keyword id="KW-0472">Membrane</keyword>
<keyword id="KW-0547">Nucleotide-binding</keyword>
<keyword id="KW-1185">Reference proteome</keyword>
<keyword id="KW-0812">Transmembrane</keyword>
<keyword id="KW-1133">Transmembrane helix</keyword>
<gene>
    <name type="primary">ftsK</name>
    <name type="ordered locus">SAG1529</name>
</gene>